<gene>
    <name evidence="1" type="primary">hemH</name>
    <name type="ordered locus">Gmet_0019</name>
</gene>
<keyword id="KW-0963">Cytoplasm</keyword>
<keyword id="KW-0350">Heme biosynthesis</keyword>
<keyword id="KW-0408">Iron</keyword>
<keyword id="KW-0456">Lyase</keyword>
<keyword id="KW-0479">Metal-binding</keyword>
<keyword id="KW-0627">Porphyrin biosynthesis</keyword>
<keyword id="KW-1185">Reference proteome</keyword>
<sequence>MSEKTAVLLLQMGGPDSLDAVEPFLVNLFSDRDIIRIGPAFLQPFIARLIAKKRATPVERKYEEIGGKSPIRELTEAQAKALEEVLGDGYCCFTAMRYWKPTTVEALAAIRREGITRIIALSLYPHYSRATTGSSVNELKRVLAQSGATFDVTYVDRFFDHPRYIEALAEKIKEGLDDFHPLAEVQILFSAHSLPQSFIDEGDPYLSHIEETVRLVMERFEGVTYHLAFQSRAGPVKWLEPSTEEILEYLAAHQVKNLLMVPLSFVSDHIETLHEIDIEYAMLAHRLGYAKFRRSPSLNTSPLFIDCLADLVRKAGM</sequence>
<dbReference type="EC" id="4.98.1.1" evidence="1"/>
<dbReference type="EMBL" id="CP000148">
    <property type="protein sequence ID" value="ABB30269.1"/>
    <property type="molecule type" value="Genomic_DNA"/>
</dbReference>
<dbReference type="RefSeq" id="WP_004513785.1">
    <property type="nucleotide sequence ID" value="NC_007517.1"/>
</dbReference>
<dbReference type="SMR" id="Q39ZQ5"/>
<dbReference type="STRING" id="269799.Gmet_0019"/>
<dbReference type="KEGG" id="gme:Gmet_0019"/>
<dbReference type="eggNOG" id="COG0276">
    <property type="taxonomic scope" value="Bacteria"/>
</dbReference>
<dbReference type="HOGENOM" id="CLU_018884_4_1_7"/>
<dbReference type="UniPathway" id="UPA00252">
    <property type="reaction ID" value="UER00325"/>
</dbReference>
<dbReference type="Proteomes" id="UP000007073">
    <property type="component" value="Chromosome"/>
</dbReference>
<dbReference type="GO" id="GO:0005737">
    <property type="term" value="C:cytoplasm"/>
    <property type="evidence" value="ECO:0007669"/>
    <property type="project" value="UniProtKB-SubCell"/>
</dbReference>
<dbReference type="GO" id="GO:0004325">
    <property type="term" value="F:ferrochelatase activity"/>
    <property type="evidence" value="ECO:0007669"/>
    <property type="project" value="UniProtKB-UniRule"/>
</dbReference>
<dbReference type="GO" id="GO:0046872">
    <property type="term" value="F:metal ion binding"/>
    <property type="evidence" value="ECO:0007669"/>
    <property type="project" value="UniProtKB-KW"/>
</dbReference>
<dbReference type="GO" id="GO:0006783">
    <property type="term" value="P:heme biosynthetic process"/>
    <property type="evidence" value="ECO:0007669"/>
    <property type="project" value="UniProtKB-UniRule"/>
</dbReference>
<dbReference type="CDD" id="cd00419">
    <property type="entry name" value="Ferrochelatase_C"/>
    <property type="match status" value="1"/>
</dbReference>
<dbReference type="CDD" id="cd03411">
    <property type="entry name" value="Ferrochelatase_N"/>
    <property type="match status" value="1"/>
</dbReference>
<dbReference type="Gene3D" id="3.40.50.1400">
    <property type="match status" value="2"/>
</dbReference>
<dbReference type="HAMAP" id="MF_00323">
    <property type="entry name" value="Ferrochelatase"/>
    <property type="match status" value="1"/>
</dbReference>
<dbReference type="InterPro" id="IPR001015">
    <property type="entry name" value="Ferrochelatase"/>
</dbReference>
<dbReference type="InterPro" id="IPR019772">
    <property type="entry name" value="Ferrochelatase_AS"/>
</dbReference>
<dbReference type="InterPro" id="IPR033644">
    <property type="entry name" value="Ferrochelatase_C"/>
</dbReference>
<dbReference type="InterPro" id="IPR033659">
    <property type="entry name" value="Ferrochelatase_N"/>
</dbReference>
<dbReference type="NCBIfam" id="TIGR00109">
    <property type="entry name" value="hemH"/>
    <property type="match status" value="1"/>
</dbReference>
<dbReference type="PANTHER" id="PTHR11108">
    <property type="entry name" value="FERROCHELATASE"/>
    <property type="match status" value="1"/>
</dbReference>
<dbReference type="PANTHER" id="PTHR11108:SF1">
    <property type="entry name" value="FERROCHELATASE, MITOCHONDRIAL"/>
    <property type="match status" value="1"/>
</dbReference>
<dbReference type="Pfam" id="PF00762">
    <property type="entry name" value="Ferrochelatase"/>
    <property type="match status" value="1"/>
</dbReference>
<dbReference type="SUPFAM" id="SSF53800">
    <property type="entry name" value="Chelatase"/>
    <property type="match status" value="1"/>
</dbReference>
<dbReference type="PROSITE" id="PS00534">
    <property type="entry name" value="FERROCHELATASE"/>
    <property type="match status" value="1"/>
</dbReference>
<accession>Q39ZQ5</accession>
<reference key="1">
    <citation type="journal article" date="2009" name="BMC Microbiol.">
        <title>The genome sequence of Geobacter metallireducens: features of metabolism, physiology and regulation common and dissimilar to Geobacter sulfurreducens.</title>
        <authorList>
            <person name="Aklujkar M."/>
            <person name="Krushkal J."/>
            <person name="DiBartolo G."/>
            <person name="Lapidus A."/>
            <person name="Land M.L."/>
            <person name="Lovley D.R."/>
        </authorList>
    </citation>
    <scope>NUCLEOTIDE SEQUENCE [LARGE SCALE GENOMIC DNA]</scope>
    <source>
        <strain>ATCC 53774 / DSM 7210 / GS-15</strain>
    </source>
</reference>
<protein>
    <recommendedName>
        <fullName evidence="1">Ferrochelatase</fullName>
        <ecNumber evidence="1">4.98.1.1</ecNumber>
    </recommendedName>
    <alternativeName>
        <fullName evidence="1">Heme synthase</fullName>
    </alternativeName>
    <alternativeName>
        <fullName evidence="1">Protoheme ferro-lyase</fullName>
    </alternativeName>
</protein>
<proteinExistence type="inferred from homology"/>
<comment type="function">
    <text evidence="1">Catalyzes the ferrous insertion into protoporphyrin IX.</text>
</comment>
<comment type="catalytic activity">
    <reaction evidence="1">
        <text>heme b + 2 H(+) = protoporphyrin IX + Fe(2+)</text>
        <dbReference type="Rhea" id="RHEA:22584"/>
        <dbReference type="ChEBI" id="CHEBI:15378"/>
        <dbReference type="ChEBI" id="CHEBI:29033"/>
        <dbReference type="ChEBI" id="CHEBI:57306"/>
        <dbReference type="ChEBI" id="CHEBI:60344"/>
        <dbReference type="EC" id="4.98.1.1"/>
    </reaction>
</comment>
<comment type="pathway">
    <text evidence="1">Porphyrin-containing compound metabolism; protoheme biosynthesis; protoheme from protoporphyrin-IX: step 1/1.</text>
</comment>
<comment type="subcellular location">
    <subcellularLocation>
        <location evidence="1">Cytoplasm</location>
    </subcellularLocation>
</comment>
<comment type="similarity">
    <text evidence="1">Belongs to the ferrochelatase family.</text>
</comment>
<evidence type="ECO:0000255" key="1">
    <source>
        <dbReference type="HAMAP-Rule" id="MF_00323"/>
    </source>
</evidence>
<feature type="chain" id="PRO_1000019305" description="Ferrochelatase">
    <location>
        <begin position="1"/>
        <end position="317"/>
    </location>
</feature>
<feature type="binding site" evidence="1">
    <location>
        <position position="192"/>
    </location>
    <ligand>
        <name>Fe cation</name>
        <dbReference type="ChEBI" id="CHEBI:24875"/>
    </ligand>
</feature>
<feature type="binding site" evidence="1">
    <location>
        <position position="271"/>
    </location>
    <ligand>
        <name>Fe cation</name>
        <dbReference type="ChEBI" id="CHEBI:24875"/>
    </ligand>
</feature>
<name>HEMH_GEOMG</name>
<organism>
    <name type="scientific">Geobacter metallireducens (strain ATCC 53774 / DSM 7210 / GS-15)</name>
    <dbReference type="NCBI Taxonomy" id="269799"/>
    <lineage>
        <taxon>Bacteria</taxon>
        <taxon>Pseudomonadati</taxon>
        <taxon>Thermodesulfobacteriota</taxon>
        <taxon>Desulfuromonadia</taxon>
        <taxon>Geobacterales</taxon>
        <taxon>Geobacteraceae</taxon>
        <taxon>Geobacter</taxon>
    </lineage>
</organism>